<proteinExistence type="evidence at protein level"/>
<accession>Q6YTF1</accession>
<accession>A0A0P0VKN5</accession>
<feature type="chain" id="PRO_0000418867" description="Oryzalexin D synthase">
    <location>
        <begin position="1"/>
        <end position="500"/>
    </location>
</feature>
<feature type="transmembrane region" description="Helical" evidence="2">
    <location>
        <begin position="4"/>
        <end position="24"/>
    </location>
</feature>
<feature type="binding site" description="axial binding residue" evidence="1">
    <location>
        <position position="442"/>
    </location>
    <ligand>
        <name>heme</name>
        <dbReference type="ChEBI" id="CHEBI:30413"/>
    </ligand>
    <ligandPart>
        <name>Fe</name>
        <dbReference type="ChEBI" id="CHEBI:18248"/>
    </ligandPart>
</feature>
<name>C76M8_ORYSJ</name>
<protein>
    <recommendedName>
        <fullName>Oryzalexin D synthase</fullName>
        <ecNumber evidence="3 4">1.14.14.112</ecNumber>
        <ecNumber evidence="5">1.14.14.123</ecNumber>
    </recommendedName>
    <alternativeName>
        <fullName evidence="6">Cytochrome P450 76M8</fullName>
    </alternativeName>
    <alternativeName>
        <fullName>Ent-cassadiene C11-alpha-hydroxylase 2</fullName>
    </alternativeName>
</protein>
<keyword id="KW-0349">Heme</keyword>
<keyword id="KW-0408">Iron</keyword>
<keyword id="KW-0472">Membrane</keyword>
<keyword id="KW-0479">Metal-binding</keyword>
<keyword id="KW-0503">Monooxygenase</keyword>
<keyword id="KW-0560">Oxidoreductase</keyword>
<keyword id="KW-0611">Plant defense</keyword>
<keyword id="KW-1185">Reference proteome</keyword>
<keyword id="KW-0812">Transmembrane</keyword>
<keyword id="KW-1133">Transmembrane helix</keyword>
<comment type="function">
    <text evidence="3 4 5">Enzyme of the diterpenoid metabolism involved in the biosynthesis of both phytocassane and the oryzalexin class of phytoalexins. Can hydroxylate syn-pimaradiene, ent-pimaradiene, ent-sandaracopimaradiene, ent-isokaurene, ent-kaurene, and ent-cassadiene, but no activity with syn-stemodene, syn-stemarene, syn-labdatriene, C11-alpha-hydroxy-ent-cassadiene or syn-pimadien-19-oic acid as substrates. Hydroxylates 3-alpha-hydroxy-ent-sandaracopimaradiene at C-7-beta, resulting in a 3-alpha,7-beta-diol corresponding to oryzalexins D.</text>
</comment>
<comment type="catalytic activity">
    <reaction evidence="3 4">
        <text>ent-cassa-12,15-diene + reduced [NADPH--hemoprotein reductase] + O2 = ent-11beta-hydroxycassa-12,15-diene + oxidized [NADPH--hemoprotein reductase] + H2O + H(+)</text>
        <dbReference type="Rhea" id="RHEA:31967"/>
        <dbReference type="Rhea" id="RHEA-COMP:11964"/>
        <dbReference type="Rhea" id="RHEA-COMP:11965"/>
        <dbReference type="ChEBI" id="CHEBI:15377"/>
        <dbReference type="ChEBI" id="CHEBI:15378"/>
        <dbReference type="ChEBI" id="CHEBI:15379"/>
        <dbReference type="ChEBI" id="CHEBI:50060"/>
        <dbReference type="ChEBI" id="CHEBI:57618"/>
        <dbReference type="ChEBI" id="CHEBI:58210"/>
        <dbReference type="ChEBI" id="CHEBI:63662"/>
        <dbReference type="EC" id="1.14.14.112"/>
    </reaction>
</comment>
<comment type="catalytic activity">
    <reaction evidence="5">
        <text>ent-sandaracopimaradien-3beta-ol + reduced [NADPH--hemoprotein reductase] + O2 = oryzalexin D + oxidized [NADPH--hemoprotein reductase] + H2O + H(+)</text>
        <dbReference type="Rhea" id="RHEA:41472"/>
        <dbReference type="Rhea" id="RHEA-COMP:11964"/>
        <dbReference type="Rhea" id="RHEA-COMP:11965"/>
        <dbReference type="ChEBI" id="CHEBI:15377"/>
        <dbReference type="ChEBI" id="CHEBI:15378"/>
        <dbReference type="ChEBI" id="CHEBI:15379"/>
        <dbReference type="ChEBI" id="CHEBI:57618"/>
        <dbReference type="ChEBI" id="CHEBI:58210"/>
        <dbReference type="ChEBI" id="CHEBI:78255"/>
        <dbReference type="ChEBI" id="CHEBI:78256"/>
        <dbReference type="EC" id="1.14.14.123"/>
    </reaction>
</comment>
<comment type="cofactor">
    <cofactor evidence="1">
        <name>heme</name>
        <dbReference type="ChEBI" id="CHEBI:30413"/>
    </cofactor>
</comment>
<comment type="biophysicochemical properties">
    <kinetics>
        <KM evidence="3 4">4 uM for ent-cassadiene</KM>
        <KM evidence="4">4 uM for ent-pimaradiene</KM>
        <KM evidence="4">15 uM for ent-isokaurene</KM>
        <KM evidence="4">7 uM for ent-sandaracopimaradiene</KM>
        <KM evidence="4">5 uM for ent-kaurene</KM>
        <KM evidence="4">2 uM for syn-pimaradiene</KM>
        <text evidence="4">kcat is 0.011 sec(-1) with ent-sandaracopimaradien as substrate. kcat is 0.009 sec(-1) with ent-pimaradiene as substrate. kcat is 0.015 sec(-1) with ent-isokaurene as substrate. kcat is 0.006 sec(-1) with ent-cassadiene as substrate. kcat is 0.009 sec(-1) with ent-kaurene as substrate. kcat is 0.006 sec(-1) with syn-pimaradiene as substrate.</text>
    </kinetics>
</comment>
<comment type="subcellular location">
    <subcellularLocation>
        <location evidence="7">Membrane</location>
        <topology evidence="7">Single-pass membrane protein</topology>
    </subcellularLocation>
</comment>
<comment type="induction">
    <text evidence="4">Up-regulated by methyl jasmonate.</text>
</comment>
<comment type="similarity">
    <text evidence="7">Belongs to the cytochrome P450 family.</text>
</comment>
<comment type="online information" name="Cytochrome P450 Homepage">
    <link uri="https://drnelson.uthsc.edu/"/>
</comment>
<dbReference type="EC" id="1.14.14.112" evidence="3 4"/>
<dbReference type="EC" id="1.14.14.123" evidence="5"/>
<dbReference type="EMBL" id="AP005835">
    <property type="protein sequence ID" value="BAD17658.1"/>
    <property type="molecule type" value="Genomic_DNA"/>
</dbReference>
<dbReference type="EMBL" id="AP006069">
    <property type="protein sequence ID" value="BAD17786.1"/>
    <property type="molecule type" value="Genomic_DNA"/>
</dbReference>
<dbReference type="EMBL" id="AP008208">
    <property type="protein sequence ID" value="BAF09098.1"/>
    <property type="molecule type" value="Genomic_DNA"/>
</dbReference>
<dbReference type="EMBL" id="AP014958">
    <property type="protein sequence ID" value="BAS79332.1"/>
    <property type="molecule type" value="Genomic_DNA"/>
</dbReference>
<dbReference type="EMBL" id="CM000139">
    <property type="protein sequence ID" value="EAZ23507.1"/>
    <property type="molecule type" value="Genomic_DNA"/>
</dbReference>
<dbReference type="EMBL" id="AK069701">
    <property type="protein sequence ID" value="BAG91560.1"/>
    <property type="molecule type" value="mRNA"/>
</dbReference>
<dbReference type="RefSeq" id="XP_015623630.1">
    <property type="nucleotide sequence ID" value="XM_015768144.1"/>
</dbReference>
<dbReference type="SMR" id="Q6YTF1"/>
<dbReference type="FunCoup" id="Q6YTF1">
    <property type="interactions" value="501"/>
</dbReference>
<dbReference type="STRING" id="39947.Q6YTF1"/>
<dbReference type="PaxDb" id="39947-Q6YTF1"/>
<dbReference type="EnsemblPlants" id="Os02t0569400-01">
    <property type="protein sequence ID" value="Os02t0569400-01"/>
    <property type="gene ID" value="Os02g0569400"/>
</dbReference>
<dbReference type="Gramene" id="Os02t0569400-01">
    <property type="protein sequence ID" value="Os02t0569400-01"/>
    <property type="gene ID" value="Os02g0569400"/>
</dbReference>
<dbReference type="KEGG" id="dosa:Os02g0569400"/>
<dbReference type="eggNOG" id="KOG0156">
    <property type="taxonomic scope" value="Eukaryota"/>
</dbReference>
<dbReference type="InParanoid" id="Q6YTF1"/>
<dbReference type="OMA" id="DLWKWRT"/>
<dbReference type="OrthoDB" id="686267at2759"/>
<dbReference type="BioCyc" id="MetaCyc:MONOMER-18617"/>
<dbReference type="SABIO-RK" id="Q6YTF1"/>
<dbReference type="Proteomes" id="UP000000763">
    <property type="component" value="Chromosome 2"/>
</dbReference>
<dbReference type="Proteomes" id="UP000007752">
    <property type="component" value="Chromosome 2"/>
</dbReference>
<dbReference type="Proteomes" id="UP000059680">
    <property type="component" value="Chromosome 2"/>
</dbReference>
<dbReference type="ExpressionAtlas" id="Q6YTF1">
    <property type="expression patterns" value="baseline and differential"/>
</dbReference>
<dbReference type="GO" id="GO:0016020">
    <property type="term" value="C:membrane"/>
    <property type="evidence" value="ECO:0000318"/>
    <property type="project" value="GO_Central"/>
</dbReference>
<dbReference type="GO" id="GO:0102598">
    <property type="term" value="F:3alpha-hydroxy-ent-sandaracopimardiene 7-beta-monooxygenase activity"/>
    <property type="evidence" value="ECO:0007669"/>
    <property type="project" value="UniProtKB-EC"/>
</dbReference>
<dbReference type="GO" id="GO:0036202">
    <property type="term" value="F:ent-cassa-12,15-diene 11-hydroxylase activity"/>
    <property type="evidence" value="ECO:0000314"/>
    <property type="project" value="UniProtKB"/>
</dbReference>
<dbReference type="GO" id="GO:0020037">
    <property type="term" value="F:heme binding"/>
    <property type="evidence" value="ECO:0007669"/>
    <property type="project" value="InterPro"/>
</dbReference>
<dbReference type="GO" id="GO:0005506">
    <property type="term" value="F:iron ion binding"/>
    <property type="evidence" value="ECO:0007669"/>
    <property type="project" value="InterPro"/>
</dbReference>
<dbReference type="GO" id="GO:0004497">
    <property type="term" value="F:monooxygenase activity"/>
    <property type="evidence" value="ECO:0000314"/>
    <property type="project" value="UniProtKB"/>
</dbReference>
<dbReference type="GO" id="GO:0016709">
    <property type="term" value="F:oxidoreductase activity, acting on paired donors, with incorporation or reduction of molecular oxygen, NAD(P)H as one donor, and incorporation of one atom of oxygen"/>
    <property type="evidence" value="ECO:0000318"/>
    <property type="project" value="GO_Central"/>
</dbReference>
<dbReference type="GO" id="GO:0006952">
    <property type="term" value="P:defense response"/>
    <property type="evidence" value="ECO:0007669"/>
    <property type="project" value="UniProtKB-KW"/>
</dbReference>
<dbReference type="GO" id="GO:0051502">
    <property type="term" value="P:diterpene phytoalexin biosynthetic process"/>
    <property type="evidence" value="ECO:0000314"/>
    <property type="project" value="UniProtKB"/>
</dbReference>
<dbReference type="GO" id="GO:0016102">
    <property type="term" value="P:diterpenoid biosynthetic process"/>
    <property type="evidence" value="ECO:0000314"/>
    <property type="project" value="UniProtKB"/>
</dbReference>
<dbReference type="CDD" id="cd11073">
    <property type="entry name" value="CYP76-like"/>
    <property type="match status" value="1"/>
</dbReference>
<dbReference type="FunFam" id="1.10.630.10:FF:000007">
    <property type="entry name" value="Cytochrome P450 76C4"/>
    <property type="match status" value="1"/>
</dbReference>
<dbReference type="Gene3D" id="1.10.630.10">
    <property type="entry name" value="Cytochrome P450"/>
    <property type="match status" value="1"/>
</dbReference>
<dbReference type="InterPro" id="IPR001128">
    <property type="entry name" value="Cyt_P450"/>
</dbReference>
<dbReference type="InterPro" id="IPR017972">
    <property type="entry name" value="Cyt_P450_CS"/>
</dbReference>
<dbReference type="InterPro" id="IPR002401">
    <property type="entry name" value="Cyt_P450_E_grp-I"/>
</dbReference>
<dbReference type="InterPro" id="IPR036396">
    <property type="entry name" value="Cyt_P450_sf"/>
</dbReference>
<dbReference type="PANTHER" id="PTHR47950">
    <property type="entry name" value="CYTOCHROME P450, FAMILY 76, SUBFAMILY C, POLYPEPTIDE 5-RELATED"/>
    <property type="match status" value="1"/>
</dbReference>
<dbReference type="PANTHER" id="PTHR47950:SF44">
    <property type="entry name" value="CYTOCHROME P450, FAMILY 76, SUBFAMILY C, POLYPEPTIDE 5-RELATED"/>
    <property type="match status" value="1"/>
</dbReference>
<dbReference type="Pfam" id="PF00067">
    <property type="entry name" value="p450"/>
    <property type="match status" value="1"/>
</dbReference>
<dbReference type="PRINTS" id="PR00463">
    <property type="entry name" value="EP450I"/>
</dbReference>
<dbReference type="PRINTS" id="PR00385">
    <property type="entry name" value="P450"/>
</dbReference>
<dbReference type="SUPFAM" id="SSF48264">
    <property type="entry name" value="Cytochrome P450"/>
    <property type="match status" value="1"/>
</dbReference>
<dbReference type="PROSITE" id="PS00086">
    <property type="entry name" value="CYTOCHROME_P450"/>
    <property type="match status" value="1"/>
</dbReference>
<organism>
    <name type="scientific">Oryza sativa subsp. japonica</name>
    <name type="common">Rice</name>
    <dbReference type="NCBI Taxonomy" id="39947"/>
    <lineage>
        <taxon>Eukaryota</taxon>
        <taxon>Viridiplantae</taxon>
        <taxon>Streptophyta</taxon>
        <taxon>Embryophyta</taxon>
        <taxon>Tracheophyta</taxon>
        <taxon>Spermatophyta</taxon>
        <taxon>Magnoliopsida</taxon>
        <taxon>Liliopsida</taxon>
        <taxon>Poales</taxon>
        <taxon>Poaceae</taxon>
        <taxon>BOP clade</taxon>
        <taxon>Oryzoideae</taxon>
        <taxon>Oryzeae</taxon>
        <taxon>Oryzinae</taxon>
        <taxon>Oryza</taxon>
        <taxon>Oryza sativa</taxon>
    </lineage>
</organism>
<reference key="1">
    <citation type="journal article" date="2005" name="Nature">
        <title>The map-based sequence of the rice genome.</title>
        <authorList>
            <consortium name="International rice genome sequencing project (IRGSP)"/>
        </authorList>
    </citation>
    <scope>NUCLEOTIDE SEQUENCE [LARGE SCALE GENOMIC DNA]</scope>
    <source>
        <strain>cv. Nipponbare</strain>
    </source>
</reference>
<reference key="2">
    <citation type="journal article" date="2008" name="Nucleic Acids Res.">
        <title>The rice annotation project database (RAP-DB): 2008 update.</title>
        <authorList>
            <consortium name="The rice annotation project (RAP)"/>
        </authorList>
    </citation>
    <scope>GENOME REANNOTATION</scope>
    <source>
        <strain>cv. Nipponbare</strain>
    </source>
</reference>
<reference key="3">
    <citation type="journal article" date="2013" name="Rice">
        <title>Improvement of the Oryza sativa Nipponbare reference genome using next generation sequence and optical map data.</title>
        <authorList>
            <person name="Kawahara Y."/>
            <person name="de la Bastide M."/>
            <person name="Hamilton J.P."/>
            <person name="Kanamori H."/>
            <person name="McCombie W.R."/>
            <person name="Ouyang S."/>
            <person name="Schwartz D.C."/>
            <person name="Tanaka T."/>
            <person name="Wu J."/>
            <person name="Zhou S."/>
            <person name="Childs K.L."/>
            <person name="Davidson R.M."/>
            <person name="Lin H."/>
            <person name="Quesada-Ocampo L."/>
            <person name="Vaillancourt B."/>
            <person name="Sakai H."/>
            <person name="Lee S.S."/>
            <person name="Kim J."/>
            <person name="Numa H."/>
            <person name="Itoh T."/>
            <person name="Buell C.R."/>
            <person name="Matsumoto T."/>
        </authorList>
    </citation>
    <scope>GENOME REANNOTATION</scope>
    <source>
        <strain>cv. Nipponbare</strain>
    </source>
</reference>
<reference key="4">
    <citation type="journal article" date="2005" name="PLoS Biol.">
        <title>The genomes of Oryza sativa: a history of duplications.</title>
        <authorList>
            <person name="Yu J."/>
            <person name="Wang J."/>
            <person name="Lin W."/>
            <person name="Li S."/>
            <person name="Li H."/>
            <person name="Zhou J."/>
            <person name="Ni P."/>
            <person name="Dong W."/>
            <person name="Hu S."/>
            <person name="Zeng C."/>
            <person name="Zhang J."/>
            <person name="Zhang Y."/>
            <person name="Li R."/>
            <person name="Xu Z."/>
            <person name="Li S."/>
            <person name="Li X."/>
            <person name="Zheng H."/>
            <person name="Cong L."/>
            <person name="Lin L."/>
            <person name="Yin J."/>
            <person name="Geng J."/>
            <person name="Li G."/>
            <person name="Shi J."/>
            <person name="Liu J."/>
            <person name="Lv H."/>
            <person name="Li J."/>
            <person name="Wang J."/>
            <person name="Deng Y."/>
            <person name="Ran L."/>
            <person name="Shi X."/>
            <person name="Wang X."/>
            <person name="Wu Q."/>
            <person name="Li C."/>
            <person name="Ren X."/>
            <person name="Wang J."/>
            <person name="Wang X."/>
            <person name="Li D."/>
            <person name="Liu D."/>
            <person name="Zhang X."/>
            <person name="Ji Z."/>
            <person name="Zhao W."/>
            <person name="Sun Y."/>
            <person name="Zhang Z."/>
            <person name="Bao J."/>
            <person name="Han Y."/>
            <person name="Dong L."/>
            <person name="Ji J."/>
            <person name="Chen P."/>
            <person name="Wu S."/>
            <person name="Liu J."/>
            <person name="Xiao Y."/>
            <person name="Bu D."/>
            <person name="Tan J."/>
            <person name="Yang L."/>
            <person name="Ye C."/>
            <person name="Zhang J."/>
            <person name="Xu J."/>
            <person name="Zhou Y."/>
            <person name="Yu Y."/>
            <person name="Zhang B."/>
            <person name="Zhuang S."/>
            <person name="Wei H."/>
            <person name="Liu B."/>
            <person name="Lei M."/>
            <person name="Yu H."/>
            <person name="Li Y."/>
            <person name="Xu H."/>
            <person name="Wei S."/>
            <person name="He X."/>
            <person name="Fang L."/>
            <person name="Zhang Z."/>
            <person name="Zhang Y."/>
            <person name="Huang X."/>
            <person name="Su Z."/>
            <person name="Tong W."/>
            <person name="Li J."/>
            <person name="Tong Z."/>
            <person name="Li S."/>
            <person name="Ye J."/>
            <person name="Wang L."/>
            <person name="Fang L."/>
            <person name="Lei T."/>
            <person name="Chen C.-S."/>
            <person name="Chen H.-C."/>
            <person name="Xu Z."/>
            <person name="Li H."/>
            <person name="Huang H."/>
            <person name="Zhang F."/>
            <person name="Xu H."/>
            <person name="Li N."/>
            <person name="Zhao C."/>
            <person name="Li S."/>
            <person name="Dong L."/>
            <person name="Huang Y."/>
            <person name="Li L."/>
            <person name="Xi Y."/>
            <person name="Qi Q."/>
            <person name="Li W."/>
            <person name="Zhang B."/>
            <person name="Hu W."/>
            <person name="Zhang Y."/>
            <person name="Tian X."/>
            <person name="Jiao Y."/>
            <person name="Liang X."/>
            <person name="Jin J."/>
            <person name="Gao L."/>
            <person name="Zheng W."/>
            <person name="Hao B."/>
            <person name="Liu S.-M."/>
            <person name="Wang W."/>
            <person name="Yuan L."/>
            <person name="Cao M."/>
            <person name="McDermott J."/>
            <person name="Samudrala R."/>
            <person name="Wang J."/>
            <person name="Wong G.K.-S."/>
            <person name="Yang H."/>
        </authorList>
    </citation>
    <scope>NUCLEOTIDE SEQUENCE [LARGE SCALE GENOMIC DNA]</scope>
    <source>
        <strain>cv. Nipponbare</strain>
    </source>
</reference>
<reference key="5">
    <citation type="journal article" date="2003" name="Science">
        <title>Collection, mapping, and annotation of over 28,000 cDNA clones from japonica rice.</title>
        <authorList>
            <consortium name="The rice full-length cDNA consortium"/>
        </authorList>
    </citation>
    <scope>NUCLEOTIDE SEQUENCE [LARGE SCALE MRNA]</scope>
    <source>
        <strain>cv. Nipponbare</strain>
    </source>
</reference>
<reference key="6">
    <citation type="journal article" date="2002" name="Sci. China, Ser. C, Life Sci.">
        <title>Putative cytochrome P450 genes in rice genome (Oryza sativa L. ssp. indica) and their EST evidence.</title>
        <authorList>
            <person name="Zhong L."/>
            <person name="Wang K."/>
            <person name="Tan J."/>
            <person name="Li W."/>
            <person name="Li S."/>
        </authorList>
    </citation>
    <scope>GENE FAMILY</scope>
    <scope>NOMENCLATURE</scope>
</reference>
<reference key="7">
    <citation type="journal article" date="2011" name="FEBS Lett.">
        <title>Parsing a multifunctional biosynthetic gene cluster from rice: Biochemical characterization of CYP71Z6 &amp; 7.</title>
        <authorList>
            <person name="Wu Y."/>
            <person name="Hillwig M.L."/>
            <person name="Wang Q."/>
            <person name="Peters R.J."/>
        </authorList>
    </citation>
    <scope>FUNCTION</scope>
    <scope>CATALYTIC ACTIVITY</scope>
    <scope>BIOPHYSICOCHEMICAL PROPERTIES</scope>
</reference>
<reference key="8">
    <citation type="journal article" date="2012" name="J. Biol. Chem.">
        <title>Characterization of CYP76M5-8 indicates metabolic plasticity within a plant biosynthetic gene cluster.</title>
        <authorList>
            <person name="Wang Q."/>
            <person name="Hillwig M.L."/>
            <person name="Okada K."/>
            <person name="Yamazaki K."/>
            <person name="Wu Y."/>
            <person name="Swaminathan S."/>
            <person name="Yamane H."/>
            <person name="Peters R.J."/>
        </authorList>
    </citation>
    <scope>FUNCTION</scope>
    <scope>CATALYTIC ACTIVITY</scope>
    <scope>BIOPHYSICOCHEMICAL PROPERTIES</scope>
    <scope>INDUCTION BY METHYL JASMONATE</scope>
</reference>
<reference key="9">
    <citation type="journal article" date="2013" name="Biochem. J.">
        <title>Picking sides: distinct roles for CYP76M6 and CYP76M8 in rice oryzalexin biosynthesis.</title>
        <authorList>
            <person name="Wu Y."/>
            <person name="Wang Q."/>
            <person name="Hillwig M.L."/>
            <person name="Peters R.J."/>
        </authorList>
    </citation>
    <scope>FUNCTION</scope>
    <scope>CATALYTIC ACTIVITY</scope>
</reference>
<sequence>MENSQMWLLWGALSVALFFYFSTLRRRYAGGKPLPPGPTPLPLIGNLHLVGGGTFHHKLRDLARVHGPVMTLKLGLATNVVISSREAAIEAYTKYDRHLAARATPDTFRACGFADRSMVFIPSSDPQWKALRGIHASHVFTPRVLAAVRPIRERKVGDLIAYLRAHAGEEVLVGHAMYTGILNMVSFSYFSVDIVDMGSQMARELREVVDDIILVVGKPNVSDFYPFLRPLDLQGLRRWTTKRFNRVFSIMGDIIDRRLAHIRDNKPRHDDFLDSILELMAAGKIDRVNVLNMLFEAFVAGADTMALTLEWVMAELLKNPSVMAKARAELRDVLGDKEIVEEADAARLPYLQAVLKEAMRLHPVGALLLPHFAMEDGVEVGGYAVPKGSTVLFNAWAIMRDAAAWERPDEFVPERFVERTPQLDFRGKDVEFMPFGSGRRLCPGLPLAERVVPFILASMLHTFEWELPGGMTAEELDVSEKFKTANVLAVPLKAVPVLIK</sequence>
<gene>
    <name evidence="6" type="primary">CYP76M8</name>
    <name evidence="10" type="ordered locus">Os02g0569400</name>
    <name evidence="7" type="ordered locus">LOC_Os02g36070</name>
    <name evidence="11" type="ORF">OsJ_07203</name>
    <name evidence="8" type="ORF">OSJNBa0008E01.2</name>
    <name evidence="9" type="ORF">P0025F02.31</name>
</gene>
<evidence type="ECO:0000250" key="1">
    <source>
        <dbReference type="UniProtKB" id="P04798"/>
    </source>
</evidence>
<evidence type="ECO:0000255" key="2"/>
<evidence type="ECO:0000269" key="3">
    <source>
    </source>
</evidence>
<evidence type="ECO:0000269" key="4">
    <source>
    </source>
</evidence>
<evidence type="ECO:0000269" key="5">
    <source>
    </source>
</evidence>
<evidence type="ECO:0000303" key="6">
    <source>
    </source>
</evidence>
<evidence type="ECO:0000305" key="7"/>
<evidence type="ECO:0000312" key="8">
    <source>
        <dbReference type="EMBL" id="BAD17658.1"/>
    </source>
</evidence>
<evidence type="ECO:0000312" key="9">
    <source>
        <dbReference type="EMBL" id="BAD17786.1"/>
    </source>
</evidence>
<evidence type="ECO:0000312" key="10">
    <source>
        <dbReference type="EMBL" id="BAF09098.1"/>
    </source>
</evidence>
<evidence type="ECO:0000312" key="11">
    <source>
        <dbReference type="EMBL" id="EAZ23507.1"/>
    </source>
</evidence>